<reference key="1">
    <citation type="journal article" date="2007" name="J. Bacteriol.">
        <title>The genome sequence of avian pathogenic Escherichia coli strain O1:K1:H7 shares strong similarities with human extraintestinal pathogenic E. coli genomes.</title>
        <authorList>
            <person name="Johnson T.J."/>
            <person name="Kariyawasam S."/>
            <person name="Wannemuehler Y."/>
            <person name="Mangiamele P."/>
            <person name="Johnson S.J."/>
            <person name="Doetkott C."/>
            <person name="Skyberg J.A."/>
            <person name="Lynne A.M."/>
            <person name="Johnson J.R."/>
            <person name="Nolan L.K."/>
        </authorList>
    </citation>
    <scope>NUCLEOTIDE SEQUENCE [LARGE SCALE GENOMIC DNA]</scope>
</reference>
<feature type="chain" id="PRO_0000382967" description="Probable 4-amino-4-deoxy-L-arabinose-phosphoundecaprenol flippase subunit ArnE">
    <location>
        <begin position="1"/>
        <end position="111"/>
    </location>
</feature>
<feature type="topological domain" description="Cytoplasmic" evidence="1">
    <location>
        <begin position="1"/>
        <end position="35"/>
    </location>
</feature>
<feature type="transmembrane region" description="Helical" evidence="2">
    <location>
        <begin position="36"/>
        <end position="56"/>
    </location>
</feature>
<feature type="topological domain" description="Periplasmic" evidence="1">
    <location>
        <begin position="57"/>
        <end position="60"/>
    </location>
</feature>
<feature type="transmembrane region" description="Helical" evidence="2">
    <location>
        <begin position="61"/>
        <end position="81"/>
    </location>
</feature>
<feature type="topological domain" description="Cytoplasmic" evidence="1">
    <location>
        <begin position="82"/>
        <end position="87"/>
    </location>
</feature>
<feature type="transmembrane region" description="Helical" evidence="2">
    <location>
        <begin position="88"/>
        <end position="108"/>
    </location>
</feature>
<feature type="topological domain" description="Periplasmic" evidence="1">
    <location>
        <begin position="109"/>
        <end position="111"/>
    </location>
</feature>
<feature type="domain" description="EamA" evidence="2">
    <location>
        <begin position="40"/>
        <end position="109"/>
    </location>
</feature>
<keyword id="KW-0997">Cell inner membrane</keyword>
<keyword id="KW-1003">Cell membrane</keyword>
<keyword id="KW-0441">Lipid A biosynthesis</keyword>
<keyword id="KW-0444">Lipid biosynthesis</keyword>
<keyword id="KW-0443">Lipid metabolism</keyword>
<keyword id="KW-0448">Lipopolysaccharide biosynthesis</keyword>
<keyword id="KW-0472">Membrane</keyword>
<keyword id="KW-1185">Reference proteome</keyword>
<keyword id="KW-0812">Transmembrane</keyword>
<keyword id="KW-1133">Transmembrane helix</keyword>
<keyword id="KW-0813">Transport</keyword>
<proteinExistence type="inferred from homology"/>
<sequence length="111" mass="12166">MIWLTLVFASLLSVAGQLCQKQATCFAAVNKRRKHIVLWLGLALACLGLAMVLWLLVLQNVPVGIAYPMLSLNFVWVTLAAVKLWHEPVSLRHWCGVAFIIGGIVILGSTV</sequence>
<comment type="function">
    <text evidence="2">Translocates 4-amino-4-deoxy-L-arabinose-phosphoundecaprenol (alpha-L-Ara4N-phosphoundecaprenol) from the cytoplasmic to the periplasmic side of the inner membrane.</text>
</comment>
<comment type="pathway">
    <text evidence="2">Bacterial outer membrane biogenesis; lipopolysaccharide biosynthesis.</text>
</comment>
<comment type="subunit">
    <text evidence="2">Heterodimer of ArnE and ArnF.</text>
</comment>
<comment type="subcellular location">
    <subcellularLocation>
        <location evidence="2">Cell inner membrane</location>
        <topology evidence="2">Multi-pass membrane protein</topology>
    </subcellularLocation>
</comment>
<comment type="similarity">
    <text evidence="2">Belongs to the ArnE family.</text>
</comment>
<gene>
    <name evidence="2" type="primary">arnE</name>
    <name type="ordered locus">Ecok1_21555</name>
    <name type="ORF">APECO1_4303.1</name>
</gene>
<accession>P0CB28</accession>
<protein>
    <recommendedName>
        <fullName evidence="2">Probable 4-amino-4-deoxy-L-arabinose-phosphoundecaprenol flippase subunit ArnE</fullName>
        <shortName evidence="2">L-Ara4N-phosphoundecaprenol flippase subunit ArnE</shortName>
    </recommendedName>
    <alternativeName>
        <fullName evidence="2">Undecaprenyl phosphate-aminoarabinose flippase subunit ArnE</fullName>
    </alternativeName>
</protein>
<evidence type="ECO:0000255" key="1"/>
<evidence type="ECO:0000255" key="2">
    <source>
        <dbReference type="HAMAP-Rule" id="MF_01869"/>
    </source>
</evidence>
<dbReference type="EMBL" id="CP000468">
    <property type="status" value="NOT_ANNOTATED_CDS"/>
    <property type="molecule type" value="Genomic_DNA"/>
</dbReference>
<dbReference type="RefSeq" id="WP_000638016.1">
    <property type="nucleotide sequence ID" value="NZ_CADILS010000004.1"/>
</dbReference>
<dbReference type="SMR" id="P0CB28"/>
<dbReference type="UniPathway" id="UPA00030"/>
<dbReference type="Proteomes" id="UP000008216">
    <property type="component" value="Chromosome"/>
</dbReference>
<dbReference type="GO" id="GO:0005886">
    <property type="term" value="C:plasma membrane"/>
    <property type="evidence" value="ECO:0007669"/>
    <property type="project" value="UniProtKB-SubCell"/>
</dbReference>
<dbReference type="GO" id="GO:1901505">
    <property type="term" value="F:carbohydrate derivative transmembrane transporter activity"/>
    <property type="evidence" value="ECO:0007669"/>
    <property type="project" value="InterPro"/>
</dbReference>
<dbReference type="GO" id="GO:0009245">
    <property type="term" value="P:lipid A biosynthetic process"/>
    <property type="evidence" value="ECO:0007669"/>
    <property type="project" value="UniProtKB-UniRule"/>
</dbReference>
<dbReference type="GO" id="GO:0009103">
    <property type="term" value="P:lipopolysaccharide biosynthetic process"/>
    <property type="evidence" value="ECO:0007669"/>
    <property type="project" value="UniProtKB-UniRule"/>
</dbReference>
<dbReference type="FunFam" id="1.10.3730.20:FF:000002">
    <property type="entry name" value="Probable 4-amino-4-deoxy-L-arabinose-phosphoundecaprenol flippase subunit ArnE"/>
    <property type="match status" value="1"/>
</dbReference>
<dbReference type="Gene3D" id="1.10.3730.20">
    <property type="match status" value="1"/>
</dbReference>
<dbReference type="HAMAP" id="MF_01869">
    <property type="entry name" value="Flippase_ArnE"/>
    <property type="match status" value="1"/>
</dbReference>
<dbReference type="InterPro" id="IPR000620">
    <property type="entry name" value="EamA_dom"/>
</dbReference>
<dbReference type="InterPro" id="IPR022883">
    <property type="entry name" value="Flippase_ArnE"/>
</dbReference>
<dbReference type="InterPro" id="IPR000390">
    <property type="entry name" value="Small_drug/metabolite_transptr"/>
</dbReference>
<dbReference type="NCBIfam" id="NF011625">
    <property type="entry name" value="PRK15051.1"/>
    <property type="match status" value="1"/>
</dbReference>
<dbReference type="PANTHER" id="PTHR30561:SF23">
    <property type="entry name" value="4-AMINO-4-DEOXY-L-ARABINOSE-PHOSPHOUNDECAPRENOL FLIPPASE SUBUNIT ARNE-RELATED"/>
    <property type="match status" value="1"/>
</dbReference>
<dbReference type="PANTHER" id="PTHR30561">
    <property type="entry name" value="SMR FAMILY PROTON-DEPENDENT DRUG EFFLUX TRANSPORTER SUGE"/>
    <property type="match status" value="1"/>
</dbReference>
<dbReference type="Pfam" id="PF00892">
    <property type="entry name" value="EamA"/>
    <property type="match status" value="1"/>
</dbReference>
<dbReference type="SUPFAM" id="SSF103481">
    <property type="entry name" value="Multidrug resistance efflux transporter EmrE"/>
    <property type="match status" value="1"/>
</dbReference>
<organism>
    <name type="scientific">Escherichia coli O1:K1 / APEC</name>
    <dbReference type="NCBI Taxonomy" id="405955"/>
    <lineage>
        <taxon>Bacteria</taxon>
        <taxon>Pseudomonadati</taxon>
        <taxon>Pseudomonadota</taxon>
        <taxon>Gammaproteobacteria</taxon>
        <taxon>Enterobacterales</taxon>
        <taxon>Enterobacteriaceae</taxon>
        <taxon>Escherichia</taxon>
    </lineage>
</organism>
<name>ARNE_ECOK1</name>